<sequence>LADVEEEQMIQSVDRTAVTGASYFTSVDQSSVHTAEVGSHQPEPLKTSVDKPGSKRTQGEKFFLIHSADWLTTHALFHEVAKLDVVKLLYNEQFAVQGLLRYHTYARFGIEIQVQINPTPFQQGGLICAMVPGDQSYGSIASLTVYPHGLLNCNINNVVRIKVPFIYTRGAYHFKDPQYPVWELTIRVWSELNIGTGTSAYTSLNVLARFTDLELHGLTPLSTQMMRNEFRVSTTENVVNLSNYEDARAKMSFALDQEDWKSDASQGGGIKITHFTTWTSIPTLAAQFPFNASDSVGQQIKVIPVDPYFFQMTNTNPEQKCITALASICQMFCFWRGDLVFDFQVFPTKYHSGRLLFCFVPGNELIDVSHITLKQATTAPCAVMDITGVQSTLRFRVPWISDTPYRVNRYTKSSHQKGEYTAIGKLIVYCYNRLTSPSNVASHVRVNVYLSAINLECFAPLYHAMDVTTQVGDDSGGFSTTVSTKQNVPDPQVGITTVKDLKGRANQGKMDISGVQAPVGAITTIEDPVLAKKVPETFPELKPGESRHTSDHMSIYKFMGRSHFLCTFTFNSNNKEYTFPITLSSTSNPPHGLPATLRWFFNLFQLYRGPLDLTIIITGATDVDGMAWFTPVGLAVDTPWVEKESALSIDYKTALGAVRFNTRRTGNDQIRLPWYSYLYAVSGALDGLGDKTDSTFGLVSIQIANYNHSDEYLSFSCYLSVTEQSEFYFPRAPLNTNAMMSSETVMDRIALGDLESSVDDPRTEEDRKFESHIEKRKPYKELRLEVGKQRLKYAQEELSNEVLPPPRK</sequence>
<organism>
    <name type="scientific">Human hepatitis A virus genotype IIIA (isolate GA76)</name>
    <name type="common">HHAV</name>
    <name type="synonym">Human hepatitis A virus (isolate Human/Georgia/GA76/1976)</name>
    <dbReference type="NCBI Taxonomy" id="31706"/>
    <lineage>
        <taxon>Viruses</taxon>
        <taxon>Riboviria</taxon>
        <taxon>Orthornavirae</taxon>
        <taxon>Pisuviricota</taxon>
        <taxon>Pisoniviricetes</taxon>
        <taxon>Picornavirales</taxon>
        <taxon>Picornaviridae</taxon>
        <taxon>Heptrevirinae</taxon>
        <taxon>Hepatovirus</taxon>
        <taxon>Hepatovirus ahepa</taxon>
        <taxon>Hepatovirus A</taxon>
    </lineage>
</organism>
<feature type="chain" id="PRO_0000311004" description="Genome polyprotein">
    <location>
        <begin position="1" status="less than"/>
        <end position="808" status="greater than"/>
    </location>
</feature>
<feature type="chain" id="PRO_0000311005" description="Capsid protein VP0">
    <location>
        <begin position="1" status="less than"/>
        <end position="224"/>
    </location>
</feature>
<feature type="chain" id="PRO_0000039941" description="Capsid protein VP4">
    <location>
        <begin position="1" status="less than"/>
        <end position="2"/>
    </location>
</feature>
<feature type="chain" id="PRO_0000039942" description="Capsid protein VP2">
    <location>
        <begin position="3"/>
        <end position="224"/>
    </location>
</feature>
<feature type="chain" id="PRO_0000039943" description="Capsid protein VP3">
    <location>
        <begin position="225"/>
        <end position="470"/>
    </location>
</feature>
<feature type="chain" id="PRO_0000311006" description="Protein VP1-2A">
    <location>
        <begin position="471"/>
        <end position="808" status="greater than"/>
    </location>
</feature>
<feature type="chain" id="PRO_0000039944" description="Capsid protein VP1">
    <location>
        <begin position="471"/>
        <end position="744"/>
    </location>
</feature>
<feature type="chain" id="PRO_0000039945" description="Assembly signal 2A">
    <location>
        <begin position="745"/>
        <end position="808" status="greater than"/>
    </location>
</feature>
<feature type="region of interest" description="Disordered" evidence="4">
    <location>
        <begin position="34"/>
        <end position="55"/>
    </location>
</feature>
<feature type="short sequence motif" description="(L)YPX(n)L motif" evidence="2">
    <location>
        <begin position="146"/>
        <end position="150"/>
    </location>
</feature>
<feature type="short sequence motif" description="(L)YPX(n)L motif" evidence="2">
    <location>
        <begin position="179"/>
        <end position="184"/>
    </location>
</feature>
<feature type="site" description="Cleavage" evidence="3">
    <location>
        <begin position="2"/>
        <end position="3"/>
    </location>
</feature>
<feature type="site" description="Cleavage; by protease 3C" evidence="2">
    <location>
        <begin position="224"/>
        <end position="225"/>
    </location>
</feature>
<feature type="site" description="Cleavage; by protease 3C" evidence="2">
    <location>
        <begin position="470"/>
        <end position="471"/>
    </location>
</feature>
<feature type="site" description="Cleavage; partial; by host" evidence="2">
    <location>
        <begin position="744"/>
        <end position="745"/>
    </location>
</feature>
<feature type="site" description="Important for VP1 folding and capsid assembly" evidence="2">
    <location>
        <position position="748"/>
    </location>
</feature>
<feature type="sequence conflict" description="In Ref. 2." evidence="5" ref="2">
    <original>T</original>
    <variation>S</variation>
    <location>
        <position position="763"/>
    </location>
</feature>
<feature type="non-terminal residue">
    <location>
        <position position="1"/>
    </location>
</feature>
<feature type="non-terminal residue">
    <location>
        <position position="808"/>
    </location>
</feature>
<accession>Q02381</accession>
<proteinExistence type="inferred from homology"/>
<reference key="1">
    <citation type="journal article" date="1992" name="J. Med. Virol.">
        <title>Characterization of a genetic variant of human hepatitis A virus.</title>
        <authorList>
            <person name="Khanna B."/>
            <person name="Spelbring J.E."/>
            <person name="Innis B.L."/>
            <person name="Robertson B.H."/>
        </authorList>
    </citation>
    <scope>NUCLEOTIDE SEQUENCE [GENOMIC RNA]</scope>
</reference>
<reference key="2">
    <citation type="journal article" date="1992" name="J. Gen. Virol.">
        <title>Genetic relatedness of hepatitis A virus strains recovered from different geographical regions.</title>
        <authorList>
            <person name="Robertson B.H."/>
            <person name="Jansen R.W."/>
            <person name="Khanna B."/>
            <person name="Totsuka A."/>
            <person name="Nainan O.V."/>
            <person name="Siegl G."/>
            <person name="Widell A."/>
            <person name="Margolis H.S."/>
            <person name="Isomura S."/>
            <person name="Ito K."/>
            <person name="Ishizu T."/>
            <person name="Moritsugu Y."/>
            <person name="Lemon S.M."/>
        </authorList>
    </citation>
    <scope>NUCLEOTIDE SEQUENCE [GENOMIC RNA] OF 743-798</scope>
</reference>
<name>POLG_HAVGA</name>
<comment type="function">
    <molecule>Capsid protein VP1</molecule>
    <text evidence="2">Capsid proteins VP1, VP2, and VP3 form a closed capsid enclosing the viral positive strand RNA genome. All these proteins contain a beta-sheet structure called beta-barrel jelly roll. Together they form an icosahedral capsid (T=3) composed of 60 copies of each VP1, VP2, and VP3, with a diameter of approximately 300 Angstroms. VP1 is situated at the 12 fivefold axes, whereas VP2 and VP3 are located at the quasi-sixfold axes. The naked capsid interacts with the host receptor HAVCR1 to provide virion attachment to and probably entry into the target cell.</text>
</comment>
<comment type="function">
    <molecule>Capsid protein VP2</molecule>
    <text evidence="2">Capsid proteins VP1, VP2, and VP3 form a closed capsid enclosing the viral positive strand RNA genome. All these proteins contain a beta-sheet structure called beta-barrel jelly roll. Together they form an icosahedral capsid (T=3) composed of 60 copies of each VP1, VP2, and VP3, with a diameter of approximately 300 Angstroms. VP1 is situated at the 12 fivefold axes, whereas VP2 and VP3 are located at the quasi-sixfold axes. The naked capsid interacts with the host receptor HAVCR1 to provide virion attachment to and probably entry into the target cell.</text>
</comment>
<comment type="function">
    <molecule>Capsid protein VP3</molecule>
    <text evidence="2">Capsid proteins VP1, VP2, and VP3 form a closed capsid enclosing the viral positive strand RNA genome. All these proteins contain a beta-sheet structure called beta-barrel jelly roll. Together they form an icosahedral capsid (T=3) composed of 60 copies of each VP1, VP2, and VP3, with a diameter of approximately 300 Angstroms. VP1 is situated at the 12 fivefold axes, whereas VP2 and VP3 are located at the quasi-sixfold axes. The naked capsid interacts with the host receptor HAVCR1 to provide virion attachment to and probably entry into the target cell.</text>
</comment>
<comment type="function">
    <molecule>Capsid protein VP0</molecule>
    <text evidence="2">VP0 precursor is a component of the immature procapsids.</text>
</comment>
<comment type="function">
    <molecule>Capsid protein VP4</molecule>
    <text evidence="2">Plays a role in the assembly of the 12 pentamers into an icosahedral structure. Has not been detected in mature virions, supposedly owing to its small size.</text>
</comment>
<comment type="function">
    <molecule>Protein VP1-2A</molecule>
    <text evidence="2">Precursor component of immature procapsids that corresponds to an extended form of the structural protein VP1. After maturation, possibly by the host Cathepsin L, the assembly signal 2A is cleaved to give rise to the mature VP1 protein.</text>
</comment>
<comment type="subunit">
    <molecule>Protein VP1-2A</molecule>
    <text evidence="2">Homopentamer. Homooligomer.</text>
</comment>
<comment type="subunit">
    <molecule>Capsid protein VP1</molecule>
    <text evidence="2">Interacts with capsid protein VP2. Interacts with capsid protein VP3.</text>
</comment>
<comment type="subunit">
    <molecule>Capsid protein VP2</molecule>
    <text evidence="2">Interacts with capsid protein VP1. Interacts with capsid protein VP3.</text>
</comment>
<comment type="subunit">
    <molecule>Capsid protein VP3</molecule>
    <text evidence="2">Interacts with capsid protein VP1. Interacts with capsid protein VP2.</text>
</comment>
<comment type="subcellular location">
    <molecule>Capsid protein VP2</molecule>
    <subcellularLocation>
        <location evidence="2">Virion</location>
    </subcellularLocation>
    <subcellularLocation>
        <location evidence="2">Host endosome</location>
        <location evidence="2">Host multivesicular body</location>
    </subcellularLocation>
    <text evidence="2">The egress of newly formed virions occurs through an exosome-like mechanism involving endosomal budding of viral capsids into multivesicular bodies.</text>
</comment>
<comment type="subcellular location">
    <molecule>Capsid protein VP3</molecule>
    <subcellularLocation>
        <location evidence="2">Virion</location>
    </subcellularLocation>
    <subcellularLocation>
        <location evidence="2">Host endosome</location>
        <location evidence="2">Host multivesicular body</location>
    </subcellularLocation>
    <text evidence="2">The egress of newly formed virions occurs through an exosome-like mechanism involving endosomal budding of viral capsids into multivesicular bodies.</text>
</comment>
<comment type="subcellular location">
    <molecule>Capsid protein VP1</molecule>
    <subcellularLocation>
        <location evidence="2">Virion</location>
    </subcellularLocation>
    <subcellularLocation>
        <location evidence="2">Host endosome</location>
        <location evidence="2">Host multivesicular body</location>
    </subcellularLocation>
    <text evidence="2">The egress of newly formed virions occurs through an exosome-like mechanism involving endosomal budding of viral capsids into multivesicular bodies.</text>
</comment>
<comment type="subcellular location">
    <molecule>Capsid protein VP4</molecule>
    <subcellularLocation>
        <location evidence="2">Virion</location>
    </subcellularLocation>
    <text evidence="2">Present in the full mature virion. The egress of newly formed virions occurs through an exosome-like mechanism involving endosomal budding of viral capsids into multivesicular bodies.</text>
</comment>
<comment type="domain">
    <molecule>Protein VP1-2A</molecule>
    <text evidence="2">The assembly signal 2A region mediates pentamerization of P1-2A.</text>
</comment>
<comment type="domain">
    <molecule>Genome polyprotein</molecule>
    <text evidence="2">Late-budding domains (L domains) are short sequence motifs essential for viral particle budding. They recruit proteins of the host ESCRT machinery (Endosomal Sorting Complex Required for Transport) or ESCRT-associated proteins. The genome polyprotein contains two L domains: a tandem of (L)YPX(n)L domain which is known to bind the PDCD6IP/ALIX adaptater protein.</text>
</comment>
<comment type="domain">
    <molecule>Capsid protein VP2</molecule>
    <text evidence="2">Late-budding domains (L domains) are short sequence motifs essential for viral particle budding. They recruit proteins of the host ESCRT machinery (Endosomal Sorting Complex Required for Transport) or ESCRT-associated proteins. Capsid protein VP2 contains two L domains: a tandem of (L)YPX(n)L domain which is known to bind the Alix adaptater protein.</text>
</comment>
<comment type="PTM">
    <molecule>Genome polyprotein</molecule>
    <text evidence="2">Specific enzymatic cleavages by viral protease in vivo yield a variety of precursors and mature proteins. Polyprotein processing intermediates are produced, such as P1-2A which is a functional precursor of the structural proteins, VP0 which is a VP4-VP2 precursor, VP1-2A precursor, 3ABC precursor which is a stable and catalytically active precursor of 3A, 3B and 3C proteins, 3AB and 3CD precursors. The assembly signal 2A is removed from VP1-2A by a host protease, possibly host Cathepsin L. This cleavage occurs over a region of 3 amino-acids probably generating VP1 proteins with heterogeneous C-termini.</text>
</comment>
<comment type="PTM">
    <molecule>Capsid protein VP0</molecule>
    <text evidence="1">During virion maturation, immature virions are rendered infectious following cleavage of VP0 into VP4 and VP2. This maturation seems to be an autocatalytic event triggered by the presence of RNA in the capsid and is followed by a conformational change of the particle.</text>
</comment>
<comment type="PTM">
    <molecule>Protein VP1-2A</molecule>
    <text evidence="2">The assembly signal 2A is removed from VP1-2A by a host protease, possibly host Cathepsin L in naked virions. This cleavage does not occur in enveloped virions. This cleavage occurs over a region of 3 amino-acids probably generating VP1 proteins with heterogeneous C-termini.</text>
</comment>
<comment type="PTM">
    <molecule>Capsid protein VP4</molecule>
    <text evidence="2">Unlike other picornaviruses, does not seem to be myristoylated.</text>
</comment>
<comment type="miscellaneous">
    <molecule>Genome polyprotein</molecule>
    <text evidence="2">The need for an intact eIF4G factor for the initiation of translation of HAV results in an inability to shut off host protein synthesis by a mechanism similar to that of other picornaviruses.</text>
</comment>
<comment type="miscellaneous">
    <molecule>Genome polyprotein</molecule>
    <text evidence="2">During infection, enveloped virions (eHAV) are released from cells. These eHAV are cloaked in host-derived membranes and resemble exosomes. The membrane of eHAV is devoid of viral proteins and thus prevents their neutralization by antibodies. eHAV budding is dependent on ESCRT-associated proteins VPS4B and PDCD6IP/ALIX. eHAV are produced and released in the serum and plasma, but not in bile and feces which only contain the naked, nonenveloped virions. It is likely that eHAV also use HAVCR1 as a functional receptor to infect cells, an evolutionary trait that may enhance HAV infectivity.</text>
</comment>
<comment type="similarity">
    <text evidence="5">Belongs to the picornaviridae polyprotein family.</text>
</comment>
<dbReference type="EMBL" id="M66695">
    <property type="protein sequence ID" value="AAA45477.1"/>
    <property type="molecule type" value="Genomic_RNA"/>
</dbReference>
<dbReference type="EMBL" id="L07668">
    <property type="status" value="NOT_ANNOTATED_CDS"/>
    <property type="molecule type" value="Genomic_RNA"/>
</dbReference>
<dbReference type="SMR" id="Q02381"/>
<dbReference type="GO" id="GO:0033644">
    <property type="term" value="C:host cell membrane"/>
    <property type="evidence" value="ECO:0007669"/>
    <property type="project" value="UniProtKB-KW"/>
</dbReference>
<dbReference type="GO" id="GO:0072494">
    <property type="term" value="C:host multivesicular body"/>
    <property type="evidence" value="ECO:0007669"/>
    <property type="project" value="UniProtKB-SubCell"/>
</dbReference>
<dbReference type="GO" id="GO:0039618">
    <property type="term" value="C:T=pseudo3 icosahedral viral capsid"/>
    <property type="evidence" value="ECO:0007669"/>
    <property type="project" value="UniProtKB-KW"/>
</dbReference>
<dbReference type="GO" id="GO:0015267">
    <property type="term" value="F:channel activity"/>
    <property type="evidence" value="ECO:0007669"/>
    <property type="project" value="UniProtKB-KW"/>
</dbReference>
<dbReference type="GO" id="GO:0005198">
    <property type="term" value="F:structural molecule activity"/>
    <property type="evidence" value="ECO:0007669"/>
    <property type="project" value="InterPro"/>
</dbReference>
<dbReference type="GO" id="GO:0034220">
    <property type="term" value="P:monoatomic ion transmembrane transport"/>
    <property type="evidence" value="ECO:0007669"/>
    <property type="project" value="UniProtKB-KW"/>
</dbReference>
<dbReference type="GO" id="GO:0046718">
    <property type="term" value="P:symbiont entry into host cell"/>
    <property type="evidence" value="ECO:0007669"/>
    <property type="project" value="UniProtKB-KW"/>
</dbReference>
<dbReference type="GO" id="GO:0019062">
    <property type="term" value="P:virion attachment to host cell"/>
    <property type="evidence" value="ECO:0007669"/>
    <property type="project" value="UniProtKB-KW"/>
</dbReference>
<dbReference type="CDD" id="cd00205">
    <property type="entry name" value="rhv_like"/>
    <property type="match status" value="2"/>
</dbReference>
<dbReference type="FunFam" id="2.60.120.20:FF:000016">
    <property type="entry name" value="Genome polyprotein"/>
    <property type="match status" value="1"/>
</dbReference>
<dbReference type="FunFam" id="2.60.120.20:FF:000017">
    <property type="entry name" value="Genome polyprotein"/>
    <property type="match status" value="1"/>
</dbReference>
<dbReference type="Gene3D" id="2.60.120.20">
    <property type="match status" value="3"/>
</dbReference>
<dbReference type="InterPro" id="IPR024354">
    <property type="entry name" value="Hepatitis_A_VP1-2A"/>
</dbReference>
<dbReference type="InterPro" id="IPR001676">
    <property type="entry name" value="Picornavirus_capsid"/>
</dbReference>
<dbReference type="InterPro" id="IPR033703">
    <property type="entry name" value="Rhv-like"/>
</dbReference>
<dbReference type="InterPro" id="IPR029053">
    <property type="entry name" value="Viral_coat"/>
</dbReference>
<dbReference type="Pfam" id="PF12944">
    <property type="entry name" value="HAV_VP"/>
    <property type="match status" value="1"/>
</dbReference>
<dbReference type="Pfam" id="PF00073">
    <property type="entry name" value="Rhv"/>
    <property type="match status" value="2"/>
</dbReference>
<dbReference type="SUPFAM" id="SSF88633">
    <property type="entry name" value="Positive stranded ssRNA viruses"/>
    <property type="match status" value="3"/>
</dbReference>
<protein>
    <recommendedName>
        <fullName>Genome polyprotein</fullName>
    </recommendedName>
    <component>
        <recommendedName>
            <fullName>Capsid protein VP0</fullName>
        </recommendedName>
        <alternativeName>
            <fullName>VP4-VP2</fullName>
        </alternativeName>
    </component>
    <component>
        <recommendedName>
            <fullName>Capsid protein VP4</fullName>
        </recommendedName>
        <alternativeName>
            <fullName>P1A</fullName>
        </alternativeName>
        <alternativeName>
            <fullName>Virion protein 4</fullName>
        </alternativeName>
    </component>
    <component>
        <recommendedName>
            <fullName>Capsid protein VP2</fullName>
        </recommendedName>
        <alternativeName>
            <fullName>P1B</fullName>
        </alternativeName>
        <alternativeName>
            <fullName>Virion protein 2</fullName>
        </alternativeName>
    </component>
    <component>
        <recommendedName>
            <fullName>Capsid protein VP3</fullName>
        </recommendedName>
        <alternativeName>
            <fullName>P1C</fullName>
        </alternativeName>
        <alternativeName>
            <fullName>Virion protein 3</fullName>
        </alternativeName>
    </component>
    <component>
        <recommendedName>
            <fullName>Protein VP1-2A</fullName>
        </recommendedName>
        <alternativeName>
            <fullName>VPX</fullName>
        </alternativeName>
    </component>
    <component>
        <recommendedName>
            <fullName>Capsid protein VP1</fullName>
        </recommendedName>
        <alternativeName>
            <fullName>P1D</fullName>
        </alternativeName>
        <alternativeName>
            <fullName>Virion protein 1</fullName>
        </alternativeName>
    </component>
    <component>
        <recommendedName>
            <fullName>Assembly signal 2A</fullName>
        </recommendedName>
        <alternativeName>
            <fullName evidence="2">pX</fullName>
        </alternativeName>
    </component>
</protein>
<evidence type="ECO:0000250" key="1">
    <source>
        <dbReference type="UniProtKB" id="P03303"/>
    </source>
</evidence>
<evidence type="ECO:0000250" key="2">
    <source>
        <dbReference type="UniProtKB" id="P08617"/>
    </source>
</evidence>
<evidence type="ECO:0000255" key="3"/>
<evidence type="ECO:0000256" key="4">
    <source>
        <dbReference type="SAM" id="MobiDB-lite"/>
    </source>
</evidence>
<evidence type="ECO:0000305" key="5"/>
<organismHost>
    <name type="scientific">Cercopithecus hamlyni</name>
    <name type="common">Owl-faced monkey</name>
    <name type="synonym">Hamlyn's monkey</name>
    <dbReference type="NCBI Taxonomy" id="9536"/>
</organismHost>
<organismHost>
    <name type="scientific">Homo sapiens</name>
    <name type="common">Human</name>
    <dbReference type="NCBI Taxonomy" id="9606"/>
</organismHost>
<organismHost>
    <name type="scientific">Macaca</name>
    <name type="common">macaques</name>
    <dbReference type="NCBI Taxonomy" id="9539"/>
</organismHost>
<organismHost>
    <name type="scientific">Pan troglodytes</name>
    <name type="common">Chimpanzee</name>
    <dbReference type="NCBI Taxonomy" id="9598"/>
</organismHost>
<keyword id="KW-0167">Capsid protein</keyword>
<keyword id="KW-1039">Host endosome</keyword>
<keyword id="KW-0945">Host-virus interaction</keyword>
<keyword id="KW-0407">Ion channel</keyword>
<keyword id="KW-0406">Ion transport</keyword>
<keyword id="KW-1143">T=pseudo3 icosahedral capsid protein</keyword>
<keyword id="KW-0813">Transport</keyword>
<keyword id="KW-1161">Viral attachment to host cell</keyword>
<keyword id="KW-1182">Viral ion channel</keyword>
<keyword id="KW-0946">Virion</keyword>
<keyword id="KW-1160">Virus entry into host cell</keyword>